<keyword id="KW-0002">3D-structure</keyword>
<keyword id="KW-0007">Acetylation</keyword>
<keyword id="KW-0963">Cytoplasm</keyword>
<keyword id="KW-0903">Direct protein sequencing</keyword>
<keyword id="KW-0539">Nucleus</keyword>
<keyword id="KW-0597">Phosphoprotein</keyword>
<keyword id="KW-0647">Proteasome</keyword>
<keyword id="KW-1185">Reference proteome</keyword>
<proteinExistence type="evidence at protein level"/>
<comment type="function">
    <text evidence="1">Non-catalytic component of the 20S core proteasome complex involved in the proteolytic degradation of most intracellular proteins. This complex plays numerous essential roles within the cell by associating with different regulatory particles. Associated with two 19S regulatory particles, forms the 26S proteasome and thus participates in the ATP-dependent degradation of ubiquitinated proteins. The 26S proteasome plays a key role in the maintenance of protein homeostasis by removing misfolded or damaged proteins that could impair cellular functions, and by removing proteins whose functions are no longer required. Associated with the PA200 or PA28, the 20S proteasome mediates ubiquitin-independent protein degradation. This type of proteolysis is required in several pathways including spermatogenesis (20S-PA200 complex) or generation of a subset of MHC class I-presented antigenic peptides (20S-PA28 complex). SMAD1/OAZ1/PSMB4 complex mediates the degradation of the CREBBP/EP300 repressor SNIP1.</text>
</comment>
<comment type="subunit">
    <text evidence="1">The 26S proteasome consists of a 20S proteasome core and two 19S regulatory subunits. The 20S proteasome core is a barrel-shaped complex made of 28 subunits that are arranged in four stacked rings. The two outer rings are each formed by seven alpha subunits, and the two inner rings are formed by seven beta subunits. The proteolytic activity is exerted by three beta-subunits PSMB5, PSMB6 and PSMB7. Forms a ternary complex with SMAD1 and OAZ1 before PSMB4 is incorporated into the 20S proteasome. Interacts with PRPF19.</text>
</comment>
<comment type="subcellular location">
    <subcellularLocation>
        <location evidence="1">Cytoplasm</location>
    </subcellularLocation>
    <subcellularLocation>
        <location evidence="1">Nucleus</location>
    </subcellularLocation>
    <text evidence="1">Translocated from the cytoplasm into the nucleus following interaction with AKIRIN2, which bridges the proteasome with the nuclear import receptor IPO9.</text>
</comment>
<comment type="induction">
    <text evidence="3">Up-regulated in cardiac hypertrophy and hypoxemia.</text>
</comment>
<comment type="similarity">
    <text evidence="2">Belongs to the peptidase T1B family.</text>
</comment>
<organism>
    <name type="scientific">Rattus norvegicus</name>
    <name type="common">Rat</name>
    <dbReference type="NCBI Taxonomy" id="10116"/>
    <lineage>
        <taxon>Eukaryota</taxon>
        <taxon>Metazoa</taxon>
        <taxon>Chordata</taxon>
        <taxon>Craniata</taxon>
        <taxon>Vertebrata</taxon>
        <taxon>Euteleostomi</taxon>
        <taxon>Mammalia</taxon>
        <taxon>Eutheria</taxon>
        <taxon>Euarchontoglires</taxon>
        <taxon>Glires</taxon>
        <taxon>Rodentia</taxon>
        <taxon>Myomorpha</taxon>
        <taxon>Muroidea</taxon>
        <taxon>Muridae</taxon>
        <taxon>Murinae</taxon>
        <taxon>Rattus</taxon>
    </lineage>
</organism>
<protein>
    <recommendedName>
        <fullName>Proteasome subunit beta type-4</fullName>
    </recommendedName>
    <alternativeName>
        <fullName>Macropain beta chain</fullName>
    </alternativeName>
    <alternativeName>
        <fullName>Multicatalytic endopeptidase complex beta chain</fullName>
    </alternativeName>
    <alternativeName>
        <fullName>Proteasome beta chain</fullName>
    </alternativeName>
    <alternativeName>
        <fullName>Proteasome chain 3</fullName>
        <shortName>RN3</shortName>
    </alternativeName>
    <alternativeName>
        <fullName>Proteasome subunit beta-7</fullName>
        <shortName>beta-7</shortName>
    </alternativeName>
</protein>
<accession>P34067</accession>
<accession>P28071</accession>
<accession>P97719</accession>
<sequence>MEAFWESRTGHWAGGPAPGQFYRVPSTPSCLMDPMSAPARPITRTQNPMVTGTSVLGVKFDCGVVIAADMLGSYGSLARFRNISRIMRVNDSTMLGASGDYADFQYLKQVLGQMVIDEELFGDGHSYSPRAIHSWLTRAMYSRRSKMNPLWNTKVIGGYAGGESFLGYVDMLGVAYEAPSLATGYGAYLAQPLLREVLEKQPVLSQTEARELVERCMRVLYYRDARSYNRFQVATVTEKGVEIEGPLSAQTNWDIAHMISGFE</sequence>
<name>PSB4_RAT</name>
<evidence type="ECO:0000250" key="1">
    <source>
        <dbReference type="UniProtKB" id="P28070"/>
    </source>
</evidence>
<evidence type="ECO:0000255" key="2">
    <source>
        <dbReference type="PROSITE-ProRule" id="PRU00809"/>
    </source>
</evidence>
<evidence type="ECO:0000269" key="3">
    <source>
    </source>
</evidence>
<evidence type="ECO:0000269" key="4">
    <source>
    </source>
</evidence>
<evidence type="ECO:0000305" key="5"/>
<evidence type="ECO:0007829" key="6">
    <source>
        <dbReference type="PDB" id="6TU3"/>
    </source>
</evidence>
<dbReference type="EMBL" id="S82190">
    <property type="protein sequence ID" value="AAB47113.2"/>
    <property type="molecule type" value="mRNA"/>
</dbReference>
<dbReference type="EMBL" id="L17127">
    <property type="protein sequence ID" value="AAA42054.1"/>
    <property type="molecule type" value="mRNA"/>
</dbReference>
<dbReference type="PIR" id="S09084">
    <property type="entry name" value="S09084"/>
</dbReference>
<dbReference type="PIR" id="S32507">
    <property type="entry name" value="S32507"/>
</dbReference>
<dbReference type="PDB" id="6EPC">
    <property type="method" value="EM"/>
    <property type="resolution" value="12.30 A"/>
    <property type="chains" value="7=1-263"/>
</dbReference>
<dbReference type="PDB" id="6EPD">
    <property type="method" value="EM"/>
    <property type="resolution" value="15.40 A"/>
    <property type="chains" value="7=1-263"/>
</dbReference>
<dbReference type="PDB" id="6EPE">
    <property type="method" value="EM"/>
    <property type="resolution" value="12.80 A"/>
    <property type="chains" value="7=1-263"/>
</dbReference>
<dbReference type="PDB" id="6EPF">
    <property type="method" value="EM"/>
    <property type="resolution" value="11.80 A"/>
    <property type="chains" value="7=1-263"/>
</dbReference>
<dbReference type="PDB" id="6TU3">
    <property type="method" value="EM"/>
    <property type="resolution" value="2.70 A"/>
    <property type="chains" value="N/b=1-263"/>
</dbReference>
<dbReference type="PDBsum" id="6EPC"/>
<dbReference type="PDBsum" id="6EPD"/>
<dbReference type="PDBsum" id="6EPE"/>
<dbReference type="PDBsum" id="6EPF"/>
<dbReference type="PDBsum" id="6TU3"/>
<dbReference type="EMDB" id="EMD-10586"/>
<dbReference type="EMDB" id="EMD-3913"/>
<dbReference type="EMDB" id="EMD-3914"/>
<dbReference type="EMDB" id="EMD-3915"/>
<dbReference type="EMDB" id="EMD-3916"/>
<dbReference type="SMR" id="P34067"/>
<dbReference type="BioGRID" id="248653">
    <property type="interactions" value="3"/>
</dbReference>
<dbReference type="ComplexPortal" id="CPX-8965">
    <property type="entry name" value="30S proteasome complex"/>
</dbReference>
<dbReference type="FunCoup" id="P34067">
    <property type="interactions" value="3389"/>
</dbReference>
<dbReference type="IntAct" id="P34067">
    <property type="interactions" value="1"/>
</dbReference>
<dbReference type="STRING" id="10116.ENSRNOP00000028484"/>
<dbReference type="MEROPS" id="T01.987"/>
<dbReference type="iPTMnet" id="P34067"/>
<dbReference type="PhosphoSitePlus" id="P34067"/>
<dbReference type="jPOST" id="P34067"/>
<dbReference type="PaxDb" id="10116-ENSRNOP00000028484"/>
<dbReference type="PeptideAtlas" id="P34067"/>
<dbReference type="UCSC" id="RGD:61877">
    <property type="organism name" value="rat"/>
</dbReference>
<dbReference type="AGR" id="RGD:61877"/>
<dbReference type="RGD" id="61877">
    <property type="gene designation" value="Psmb4"/>
</dbReference>
<dbReference type="eggNOG" id="KOG0185">
    <property type="taxonomic scope" value="Eukaryota"/>
</dbReference>
<dbReference type="InParanoid" id="P34067"/>
<dbReference type="PhylomeDB" id="P34067"/>
<dbReference type="Reactome" id="R-RNO-1169091">
    <property type="pathway name" value="Activation of NF-kappaB in B cells"/>
</dbReference>
<dbReference type="Reactome" id="R-RNO-1234176">
    <property type="pathway name" value="Oxygen-dependent proline hydroxylation of Hypoxia-inducible Factor Alpha"/>
</dbReference>
<dbReference type="Reactome" id="R-RNO-1236978">
    <property type="pathway name" value="Cross-presentation of soluble exogenous antigens (endosomes)"/>
</dbReference>
<dbReference type="Reactome" id="R-RNO-174084">
    <property type="pathway name" value="Autodegradation of Cdh1 by Cdh1:APC/C"/>
</dbReference>
<dbReference type="Reactome" id="R-RNO-174113">
    <property type="pathway name" value="SCF-beta-TrCP mediated degradation of Emi1"/>
</dbReference>
<dbReference type="Reactome" id="R-RNO-174154">
    <property type="pathway name" value="APC/C:Cdc20 mediated degradation of Securin"/>
</dbReference>
<dbReference type="Reactome" id="R-RNO-174178">
    <property type="pathway name" value="APC/C:Cdh1 mediated degradation of Cdc20 and other APC/C:Cdh1 targeted proteins in late mitosis/early G1"/>
</dbReference>
<dbReference type="Reactome" id="R-RNO-174184">
    <property type="pathway name" value="Cdc20:Phospho-APC/C mediated degradation of Cyclin A"/>
</dbReference>
<dbReference type="Reactome" id="R-RNO-187577">
    <property type="pathway name" value="SCF(Skp2)-mediated degradation of p27/p21"/>
</dbReference>
<dbReference type="Reactome" id="R-RNO-195253">
    <property type="pathway name" value="Degradation of beta-catenin by the destruction complex"/>
</dbReference>
<dbReference type="Reactome" id="R-RNO-2467813">
    <property type="pathway name" value="Separation of Sister Chromatids"/>
</dbReference>
<dbReference type="Reactome" id="R-RNO-349425">
    <property type="pathway name" value="Autodegradation of the E3 ubiquitin ligase COP1"/>
</dbReference>
<dbReference type="Reactome" id="R-RNO-350562">
    <property type="pathway name" value="Regulation of ornithine decarboxylase (ODC)"/>
</dbReference>
<dbReference type="Reactome" id="R-RNO-382556">
    <property type="pathway name" value="ABC-family proteins mediated transport"/>
</dbReference>
<dbReference type="Reactome" id="R-RNO-450408">
    <property type="pathway name" value="AUF1 (hnRNP D0) binds and destabilizes mRNA"/>
</dbReference>
<dbReference type="Reactome" id="R-RNO-4608870">
    <property type="pathway name" value="Asymmetric localization of PCP proteins"/>
</dbReference>
<dbReference type="Reactome" id="R-RNO-4641257">
    <property type="pathway name" value="Degradation of AXIN"/>
</dbReference>
<dbReference type="Reactome" id="R-RNO-4641258">
    <property type="pathway name" value="Degradation of DVL"/>
</dbReference>
<dbReference type="Reactome" id="R-RNO-5358346">
    <property type="pathway name" value="Hedgehog ligand biogenesis"/>
</dbReference>
<dbReference type="Reactome" id="R-RNO-5607761">
    <property type="pathway name" value="Dectin-1 mediated noncanonical NF-kB signaling"/>
</dbReference>
<dbReference type="Reactome" id="R-RNO-5610780">
    <property type="pathway name" value="Degradation of GLI1 by the proteasome"/>
</dbReference>
<dbReference type="Reactome" id="R-RNO-5610785">
    <property type="pathway name" value="GLI3 is processed to GLI3R by the proteasome"/>
</dbReference>
<dbReference type="Reactome" id="R-RNO-5632684">
    <property type="pathway name" value="Hedgehog 'on' state"/>
</dbReference>
<dbReference type="Reactome" id="R-RNO-5658442">
    <property type="pathway name" value="Regulation of RAS by GAPs"/>
</dbReference>
<dbReference type="Reactome" id="R-RNO-5668541">
    <property type="pathway name" value="TNFR2 non-canonical NF-kB pathway"/>
</dbReference>
<dbReference type="Reactome" id="R-RNO-5676590">
    <property type="pathway name" value="NIK--&gt;noncanonical NF-kB signaling"/>
</dbReference>
<dbReference type="Reactome" id="R-RNO-5687128">
    <property type="pathway name" value="MAPK6/MAPK4 signaling"/>
</dbReference>
<dbReference type="Reactome" id="R-RNO-5689603">
    <property type="pathway name" value="UCH proteinases"/>
</dbReference>
<dbReference type="Reactome" id="R-RNO-5689880">
    <property type="pathway name" value="Ub-specific processing proteases"/>
</dbReference>
<dbReference type="Reactome" id="R-RNO-68867">
    <property type="pathway name" value="Assembly of the pre-replicative complex"/>
</dbReference>
<dbReference type="Reactome" id="R-RNO-68949">
    <property type="pathway name" value="Orc1 removal from chromatin"/>
</dbReference>
<dbReference type="Reactome" id="R-RNO-69017">
    <property type="pathway name" value="CDK-mediated phosphorylation and removal of Cdc6"/>
</dbReference>
<dbReference type="Reactome" id="R-RNO-69481">
    <property type="pathway name" value="G2/M Checkpoints"/>
</dbReference>
<dbReference type="Reactome" id="R-RNO-69601">
    <property type="pathway name" value="Ubiquitin Mediated Degradation of Phosphorylated Cdc25A"/>
</dbReference>
<dbReference type="Reactome" id="R-RNO-75815">
    <property type="pathway name" value="Ubiquitin-dependent degradation of Cyclin D"/>
</dbReference>
<dbReference type="Reactome" id="R-RNO-8852276">
    <property type="pathway name" value="The role of GTSE1 in G2/M progression after G2 checkpoint"/>
</dbReference>
<dbReference type="Reactome" id="R-RNO-8854050">
    <property type="pathway name" value="FBXL7 down-regulates AURKA during mitotic entry and in early mitosis"/>
</dbReference>
<dbReference type="Reactome" id="R-RNO-8939236">
    <property type="pathway name" value="RUNX1 regulates transcription of genes involved in differentiation of HSCs"/>
</dbReference>
<dbReference type="Reactome" id="R-RNO-8941858">
    <property type="pathway name" value="Regulation of RUNX3 expression and activity"/>
</dbReference>
<dbReference type="Reactome" id="R-RNO-8948751">
    <property type="pathway name" value="Regulation of PTEN stability and activity"/>
</dbReference>
<dbReference type="Reactome" id="R-RNO-8951664">
    <property type="pathway name" value="Neddylation"/>
</dbReference>
<dbReference type="Reactome" id="R-RNO-9755511">
    <property type="pathway name" value="KEAP1-NFE2L2 pathway"/>
</dbReference>
<dbReference type="Reactome" id="R-RNO-9762114">
    <property type="pathway name" value="GSK3B and BTRC:CUL1-mediated-degradation of NFE2L2"/>
</dbReference>
<dbReference type="Reactome" id="R-RNO-983168">
    <property type="pathway name" value="Antigen processing: Ubiquitination &amp; Proteasome degradation"/>
</dbReference>
<dbReference type="Reactome" id="R-RNO-9907900">
    <property type="pathway name" value="Proteasome assembly"/>
</dbReference>
<dbReference type="PRO" id="PR:P34067"/>
<dbReference type="Proteomes" id="UP000002494">
    <property type="component" value="Unplaced"/>
</dbReference>
<dbReference type="GO" id="GO:0036064">
    <property type="term" value="C:ciliary basal body"/>
    <property type="evidence" value="ECO:0000266"/>
    <property type="project" value="RGD"/>
</dbReference>
<dbReference type="GO" id="GO:0005737">
    <property type="term" value="C:cytoplasm"/>
    <property type="evidence" value="ECO:0000266"/>
    <property type="project" value="RGD"/>
</dbReference>
<dbReference type="GO" id="GO:0005829">
    <property type="term" value="C:cytosol"/>
    <property type="evidence" value="ECO:0000318"/>
    <property type="project" value="GO_Central"/>
</dbReference>
<dbReference type="GO" id="GO:0005634">
    <property type="term" value="C:nucleus"/>
    <property type="evidence" value="ECO:0000266"/>
    <property type="project" value="RGD"/>
</dbReference>
<dbReference type="GO" id="GO:0000502">
    <property type="term" value="C:proteasome complex"/>
    <property type="evidence" value="ECO:0000266"/>
    <property type="project" value="RGD"/>
</dbReference>
<dbReference type="GO" id="GO:0005839">
    <property type="term" value="C:proteasome core complex"/>
    <property type="evidence" value="ECO:0000250"/>
    <property type="project" value="UniProtKB"/>
</dbReference>
<dbReference type="GO" id="GO:0019774">
    <property type="term" value="C:proteasome core complex, beta-subunit complex"/>
    <property type="evidence" value="ECO:0000250"/>
    <property type="project" value="UniProtKB"/>
</dbReference>
<dbReference type="GO" id="GO:0001530">
    <property type="term" value="F:lipopolysaccharide binding"/>
    <property type="evidence" value="ECO:0000266"/>
    <property type="project" value="RGD"/>
</dbReference>
<dbReference type="GO" id="GO:0002862">
    <property type="term" value="P:negative regulation of inflammatory response to antigenic stimulus"/>
    <property type="evidence" value="ECO:0000266"/>
    <property type="project" value="RGD"/>
</dbReference>
<dbReference type="GO" id="GO:0043161">
    <property type="term" value="P:proteasome-mediated ubiquitin-dependent protein catabolic process"/>
    <property type="evidence" value="ECO:0000266"/>
    <property type="project" value="RGD"/>
</dbReference>
<dbReference type="CDD" id="cd03760">
    <property type="entry name" value="proteasome_beta_type_4"/>
    <property type="match status" value="1"/>
</dbReference>
<dbReference type="FunFam" id="3.60.20.10:FF:000014">
    <property type="entry name" value="Proteasome subunit beta type-7"/>
    <property type="match status" value="1"/>
</dbReference>
<dbReference type="Gene3D" id="3.60.20.10">
    <property type="entry name" value="Glutamine Phosphoribosylpyrophosphate, subunit 1, domain 1"/>
    <property type="match status" value="1"/>
</dbReference>
<dbReference type="InterPro" id="IPR029055">
    <property type="entry name" value="Ntn_hydrolases_N"/>
</dbReference>
<dbReference type="InterPro" id="IPR016295">
    <property type="entry name" value="Proteasome_beta4"/>
</dbReference>
<dbReference type="InterPro" id="IPR016050">
    <property type="entry name" value="Proteasome_bsu_CS"/>
</dbReference>
<dbReference type="InterPro" id="IPR001353">
    <property type="entry name" value="Proteasome_sua/b"/>
</dbReference>
<dbReference type="InterPro" id="IPR023333">
    <property type="entry name" value="Proteasome_suB-type"/>
</dbReference>
<dbReference type="PANTHER" id="PTHR32194">
    <property type="entry name" value="METALLOPROTEASE TLDD"/>
    <property type="match status" value="1"/>
</dbReference>
<dbReference type="PANTHER" id="PTHR32194:SF6">
    <property type="entry name" value="PROTEASOME SUBUNIT BETA"/>
    <property type="match status" value="1"/>
</dbReference>
<dbReference type="Pfam" id="PF00227">
    <property type="entry name" value="Proteasome"/>
    <property type="match status" value="1"/>
</dbReference>
<dbReference type="PIRSF" id="PIRSF001213">
    <property type="entry name" value="Psome_endopept_beta"/>
    <property type="match status" value="1"/>
</dbReference>
<dbReference type="SUPFAM" id="SSF56235">
    <property type="entry name" value="N-terminal nucleophile aminohydrolases (Ntn hydrolases)"/>
    <property type="match status" value="1"/>
</dbReference>
<dbReference type="PROSITE" id="PS00854">
    <property type="entry name" value="PROTEASOME_BETA_1"/>
    <property type="match status" value="1"/>
</dbReference>
<dbReference type="PROSITE" id="PS51476">
    <property type="entry name" value="PROTEASOME_BETA_2"/>
    <property type="match status" value="1"/>
</dbReference>
<feature type="propeptide" id="PRO_0000026583" evidence="4">
    <location>
        <begin position="1"/>
        <end position="44"/>
    </location>
</feature>
<feature type="chain" id="PRO_0000026584" description="Proteasome subunit beta type-4">
    <location>
        <begin position="45"/>
        <end position="263"/>
    </location>
</feature>
<feature type="modified residue" description="N-acetylmethionine" evidence="1">
    <location>
        <position position="1"/>
    </location>
</feature>
<feature type="modified residue" description="Phosphoserine" evidence="1">
    <location>
        <position position="26"/>
    </location>
</feature>
<feature type="modified residue" description="Phosphotyrosine" evidence="1">
    <location>
        <position position="101"/>
    </location>
</feature>
<feature type="sequence conflict" description="In Ref. 2; AAA42054." evidence="5" ref="2">
    <original>P</original>
    <variation>S</variation>
    <location>
        <position position="41"/>
    </location>
</feature>
<feature type="sequence conflict" description="In Ref. 2; AAA42054." evidence="5" ref="2">
    <original>V</original>
    <variation>L</variation>
    <location>
        <position position="50"/>
    </location>
</feature>
<feature type="sequence conflict" description="In Ref. 1; AAB47113." evidence="5" ref="1">
    <original>F</original>
    <variation>S</variation>
    <location>
        <position position="60"/>
    </location>
</feature>
<feature type="sequence conflict" description="In Ref. 1; AAB47113." evidence="5" ref="1">
    <original>F</original>
    <variation>L</variation>
    <location>
        <position position="80"/>
    </location>
</feature>
<feature type="sequence conflict" description="In Ref. 2; AAA42054." evidence="5" ref="2">
    <original>N</original>
    <variation>I</variation>
    <location>
        <position position="82"/>
    </location>
</feature>
<feature type="sequence conflict" description="In Ref. 1; AAB47113." evidence="5" ref="1">
    <original>I</original>
    <variation>F</variation>
    <location>
        <position position="86"/>
    </location>
</feature>
<feature type="sequence conflict" description="In Ref. 1; AAB47113." evidence="5" ref="1">
    <original>V</original>
    <variation>L</variation>
    <location>
        <position position="89"/>
    </location>
</feature>
<feature type="sequence conflict" description="In Ref. 4; AA sequence." evidence="5" ref="4">
    <original>F</original>
    <variation>L</variation>
    <location>
        <position position="121"/>
    </location>
</feature>
<feature type="strand" evidence="6">
    <location>
        <begin position="50"/>
        <end position="52"/>
    </location>
</feature>
<feature type="strand" evidence="6">
    <location>
        <begin position="55"/>
        <end position="60"/>
    </location>
</feature>
<feature type="strand" evidence="6">
    <location>
        <begin position="63"/>
        <end position="69"/>
    </location>
</feature>
<feature type="strand" evidence="6">
    <location>
        <begin position="72"/>
        <end position="80"/>
    </location>
</feature>
<feature type="strand" evidence="6">
    <location>
        <begin position="86"/>
        <end position="90"/>
    </location>
</feature>
<feature type="strand" evidence="6">
    <location>
        <begin position="93"/>
        <end position="96"/>
    </location>
</feature>
<feature type="helix" evidence="6">
    <location>
        <begin position="101"/>
        <end position="120"/>
    </location>
</feature>
<feature type="helix" evidence="6">
    <location>
        <begin position="129"/>
        <end position="145"/>
    </location>
</feature>
<feature type="strand" evidence="6">
    <location>
        <begin position="154"/>
        <end position="160"/>
    </location>
</feature>
<feature type="strand" evidence="6">
    <location>
        <begin position="163"/>
        <end position="169"/>
    </location>
</feature>
<feature type="strand" evidence="6">
    <location>
        <begin position="175"/>
        <end position="177"/>
    </location>
</feature>
<feature type="strand" evidence="6">
    <location>
        <begin position="179"/>
        <end position="182"/>
    </location>
</feature>
<feature type="helix" evidence="6">
    <location>
        <begin position="186"/>
        <end position="189"/>
    </location>
</feature>
<feature type="helix" evidence="6">
    <location>
        <begin position="191"/>
        <end position="200"/>
    </location>
</feature>
<feature type="helix" evidence="6">
    <location>
        <begin position="206"/>
        <end position="223"/>
    </location>
</feature>
<feature type="strand" evidence="6">
    <location>
        <begin position="231"/>
        <end position="237"/>
    </location>
</feature>
<feature type="strand" evidence="6">
    <location>
        <begin position="240"/>
        <end position="247"/>
    </location>
</feature>
<gene>
    <name type="primary">Psmb4</name>
</gene>
<reference key="1">
    <citation type="journal article" date="1996" name="Biochem. J.">
        <title>Processing of N3, a mammalian proteasome beta-type subunit.</title>
        <authorList>
            <person name="Thomson S."/>
            <person name="Rivett A.J."/>
        </authorList>
    </citation>
    <scope>NUCLEOTIDE SEQUENCE [MRNA] OF 1-140</scope>
</reference>
<reference key="2">
    <citation type="journal article" date="1993" name="FEBS Lett.">
        <title>cDNA cloning of a new type of subunit of mammalian proteasomes.</title>
        <authorList>
            <person name="Thomson S."/>
            <person name="Balson D.F."/>
            <person name="Rivett A.J."/>
        </authorList>
    </citation>
    <scope>NUCLEOTIDE SEQUENCE [MRNA] OF 32-263</scope>
</reference>
<reference key="3">
    <citation type="journal article" date="1990" name="FEBS Lett.">
        <title>N-terminal sequence similarities between components of the multicatalytic proteinase complex.</title>
        <authorList>
            <person name="Lilley K.S."/>
            <person name="Davison M.D."/>
            <person name="Rivett A.J."/>
        </authorList>
    </citation>
    <scope>PROTEIN SEQUENCE OF 45-55</scope>
</reference>
<reference key="4">
    <citation type="submission" date="2006-11" db="UniProtKB">
        <authorList>
            <person name="Lubec G."/>
            <person name="Diao W."/>
        </authorList>
    </citation>
    <scope>PROTEIN SEQUENCE OF 60-79 AND 109-130</scope>
    <scope>IDENTIFICATION BY MASS SPECTROMETRY</scope>
    <source>
        <strain>Sprague-Dawley</strain>
        <tissue>Hippocampus</tissue>
    </source>
</reference>
<reference key="5">
    <citation type="journal article" date="2006" name="Biochem. Biophys. Res. Commun.">
        <title>Atrophy, hypertrophy, and hypoxemia induce transcriptional regulators of the ubiquitin proteasome system in the rat heart.</title>
        <authorList>
            <person name="Razeghi P."/>
            <person name="Baskin K.K."/>
            <person name="Sharma S."/>
            <person name="Young M.E."/>
            <person name="Stepkowski S."/>
            <person name="Essop M.F."/>
            <person name="Taegtmeyer H."/>
        </authorList>
    </citation>
    <scope>INDUCTION</scope>
</reference>